<name>FDL25_ARATH</name>
<sequence>METRSVKRKKKKKEEEANWFIRVDRISNLPDSLNHQILLLLPLKSAAQASLLSKRWRSLFLSLPDLDFTSINDLKNPKSFSSNSIYKVLSLRSHRDSNNLRSLRFRVPVTFTSLNSLIRLAVTHQVQDLDIEVTTKDYFNFPRWIVTSQNLRALTLKSANLGFRLPPSSSARGGFQKLTSLSLSRVILHNQPCLSDFFTDPSFPLLEKLTLECCFGLKELKVSCRLLQEFSLKNSLQLEGLEVSGNKLQKLKVESCFYSYSEKSFVKINTPNLKTFLWNSNAVTTSVHFLDKLVCLRKAFVKVFWHHQDLNSQIQSLFTLLSGLCHSYKLQLGNQSVEILSSKKGLLKNHLLPFHNMRFLELQTRLNRHNVQTLSCLFKSCPMLNILTVKIIDDQTSERRQWNKDLWDMSNSEIQYWESQAYELESFLNHLEFVEIHGFVECENEMSLAIFLLRHGKALIKMTLRSSFLCRDSLRRQMIRSQLTGFSMASSKAKISFH</sequence>
<evidence type="ECO:0000255" key="1">
    <source>
        <dbReference type="PROSITE-ProRule" id="PRU00080"/>
    </source>
</evidence>
<gene>
    <name type="ordered locus">At4g03220</name>
    <name type="ORF">F4C21.15</name>
</gene>
<keyword id="KW-0433">Leucine-rich repeat</keyword>
<keyword id="KW-1185">Reference proteome</keyword>
<keyword id="KW-0677">Repeat</keyword>
<dbReference type="EMBL" id="AC005275">
    <property type="protein sequence ID" value="AAD14450.1"/>
    <property type="molecule type" value="Genomic_DNA"/>
</dbReference>
<dbReference type="EMBL" id="AL161496">
    <property type="protein sequence ID" value="CAB77807.1"/>
    <property type="molecule type" value="Genomic_DNA"/>
</dbReference>
<dbReference type="EMBL" id="CP002687">
    <property type="protein sequence ID" value="AEE82294.1"/>
    <property type="molecule type" value="Genomic_DNA"/>
</dbReference>
<dbReference type="PIR" id="H85040">
    <property type="entry name" value="H85040"/>
</dbReference>
<dbReference type="RefSeq" id="NP_192231.1">
    <property type="nucleotide sequence ID" value="NM_116560.1"/>
</dbReference>
<dbReference type="FunCoup" id="Q9ZR09">
    <property type="interactions" value="37"/>
</dbReference>
<dbReference type="PaxDb" id="3702-AT4G03220.1"/>
<dbReference type="EnsemblPlants" id="AT4G03220.1">
    <property type="protein sequence ID" value="AT4G03220.1"/>
    <property type="gene ID" value="AT4G03220"/>
</dbReference>
<dbReference type="GeneID" id="828021"/>
<dbReference type="Gramene" id="AT4G03220.1">
    <property type="protein sequence ID" value="AT4G03220.1"/>
    <property type="gene ID" value="AT4G03220"/>
</dbReference>
<dbReference type="KEGG" id="ath:AT4G03220"/>
<dbReference type="Araport" id="AT4G03220"/>
<dbReference type="TAIR" id="AT4G03220"/>
<dbReference type="eggNOG" id="ENOG502QWF7">
    <property type="taxonomic scope" value="Eukaryota"/>
</dbReference>
<dbReference type="HOGENOM" id="CLU_010721_1_1_1"/>
<dbReference type="InParanoid" id="Q9ZR09"/>
<dbReference type="OMA" id="KIRSQMM"/>
<dbReference type="PhylomeDB" id="Q9ZR09"/>
<dbReference type="PRO" id="PR:Q9ZR09"/>
<dbReference type="Proteomes" id="UP000006548">
    <property type="component" value="Chromosome 4"/>
</dbReference>
<dbReference type="ExpressionAtlas" id="Q9ZR09">
    <property type="expression patterns" value="baseline and differential"/>
</dbReference>
<dbReference type="Gene3D" id="1.20.1280.50">
    <property type="match status" value="1"/>
</dbReference>
<dbReference type="InterPro" id="IPR036047">
    <property type="entry name" value="F-box-like_dom_sf"/>
</dbReference>
<dbReference type="InterPro" id="IPR001810">
    <property type="entry name" value="F-box_dom"/>
</dbReference>
<dbReference type="InterPro" id="IPR006566">
    <property type="entry name" value="FBD"/>
</dbReference>
<dbReference type="InterPro" id="IPR050232">
    <property type="entry name" value="FBL13/AtMIF1-like"/>
</dbReference>
<dbReference type="PANTHER" id="PTHR31900">
    <property type="entry name" value="F-BOX/RNI SUPERFAMILY PROTEIN-RELATED"/>
    <property type="match status" value="1"/>
</dbReference>
<dbReference type="PANTHER" id="PTHR31900:SF27">
    <property type="entry name" value="FBD DOMAIN-CONTAINING PROTEIN"/>
    <property type="match status" value="1"/>
</dbReference>
<dbReference type="Pfam" id="PF00646">
    <property type="entry name" value="F-box"/>
    <property type="match status" value="1"/>
</dbReference>
<dbReference type="Pfam" id="PF08387">
    <property type="entry name" value="FBD"/>
    <property type="match status" value="1"/>
</dbReference>
<dbReference type="SMART" id="SM00579">
    <property type="entry name" value="FBD"/>
    <property type="match status" value="1"/>
</dbReference>
<dbReference type="SUPFAM" id="SSF81383">
    <property type="entry name" value="F-box domain"/>
    <property type="match status" value="1"/>
</dbReference>
<dbReference type="PROSITE" id="PS50181">
    <property type="entry name" value="FBOX"/>
    <property type="match status" value="1"/>
</dbReference>
<accession>Q9ZR09</accession>
<proteinExistence type="predicted"/>
<organism>
    <name type="scientific">Arabidopsis thaliana</name>
    <name type="common">Mouse-ear cress</name>
    <dbReference type="NCBI Taxonomy" id="3702"/>
    <lineage>
        <taxon>Eukaryota</taxon>
        <taxon>Viridiplantae</taxon>
        <taxon>Streptophyta</taxon>
        <taxon>Embryophyta</taxon>
        <taxon>Tracheophyta</taxon>
        <taxon>Spermatophyta</taxon>
        <taxon>Magnoliopsida</taxon>
        <taxon>eudicotyledons</taxon>
        <taxon>Gunneridae</taxon>
        <taxon>Pentapetalae</taxon>
        <taxon>rosids</taxon>
        <taxon>malvids</taxon>
        <taxon>Brassicales</taxon>
        <taxon>Brassicaceae</taxon>
        <taxon>Camelineae</taxon>
        <taxon>Arabidopsis</taxon>
    </lineage>
</organism>
<feature type="chain" id="PRO_0000283117" description="Putative F-box/FBD/LRR-repeat protein At4g03220">
    <location>
        <begin position="1"/>
        <end position="498"/>
    </location>
</feature>
<feature type="domain" description="F-box" evidence="1">
    <location>
        <begin position="23"/>
        <end position="71"/>
    </location>
</feature>
<feature type="repeat" description="LRR 1">
    <location>
        <begin position="148"/>
        <end position="172"/>
    </location>
</feature>
<feature type="repeat" description="LRR 2">
    <location>
        <begin position="175"/>
        <end position="200"/>
    </location>
</feature>
<feature type="repeat" description="LRR 3">
    <location>
        <begin position="235"/>
        <end position="259"/>
    </location>
</feature>
<feature type="domain" description="FBD">
    <location>
        <begin position="416"/>
        <end position="466"/>
    </location>
</feature>
<reference key="1">
    <citation type="journal article" date="1999" name="Nature">
        <title>Sequence and analysis of chromosome 4 of the plant Arabidopsis thaliana.</title>
        <authorList>
            <person name="Mayer K.F.X."/>
            <person name="Schueller C."/>
            <person name="Wambutt R."/>
            <person name="Murphy G."/>
            <person name="Volckaert G."/>
            <person name="Pohl T."/>
            <person name="Duesterhoeft A."/>
            <person name="Stiekema W."/>
            <person name="Entian K.-D."/>
            <person name="Terryn N."/>
            <person name="Harris B."/>
            <person name="Ansorge W."/>
            <person name="Brandt P."/>
            <person name="Grivell L.A."/>
            <person name="Rieger M."/>
            <person name="Weichselgartner M."/>
            <person name="de Simone V."/>
            <person name="Obermaier B."/>
            <person name="Mache R."/>
            <person name="Mueller M."/>
            <person name="Kreis M."/>
            <person name="Delseny M."/>
            <person name="Puigdomenech P."/>
            <person name="Watson M."/>
            <person name="Schmidtheini T."/>
            <person name="Reichert B."/>
            <person name="Portetelle D."/>
            <person name="Perez-Alonso M."/>
            <person name="Boutry M."/>
            <person name="Bancroft I."/>
            <person name="Vos P."/>
            <person name="Hoheisel J."/>
            <person name="Zimmermann W."/>
            <person name="Wedler H."/>
            <person name="Ridley P."/>
            <person name="Langham S.-A."/>
            <person name="McCullagh B."/>
            <person name="Bilham L."/>
            <person name="Robben J."/>
            <person name="van der Schueren J."/>
            <person name="Grymonprez B."/>
            <person name="Chuang Y.-J."/>
            <person name="Vandenbussche F."/>
            <person name="Braeken M."/>
            <person name="Weltjens I."/>
            <person name="Voet M."/>
            <person name="Bastiaens I."/>
            <person name="Aert R."/>
            <person name="Defoor E."/>
            <person name="Weitzenegger T."/>
            <person name="Bothe G."/>
            <person name="Ramsperger U."/>
            <person name="Hilbert H."/>
            <person name="Braun M."/>
            <person name="Holzer E."/>
            <person name="Brandt A."/>
            <person name="Peters S."/>
            <person name="van Staveren M."/>
            <person name="Dirkse W."/>
            <person name="Mooijman P."/>
            <person name="Klein Lankhorst R."/>
            <person name="Rose M."/>
            <person name="Hauf J."/>
            <person name="Koetter P."/>
            <person name="Berneiser S."/>
            <person name="Hempel S."/>
            <person name="Feldpausch M."/>
            <person name="Lamberth S."/>
            <person name="Van den Daele H."/>
            <person name="De Keyser A."/>
            <person name="Buysshaert C."/>
            <person name="Gielen J."/>
            <person name="Villarroel R."/>
            <person name="De Clercq R."/>
            <person name="van Montagu M."/>
            <person name="Rogers J."/>
            <person name="Cronin A."/>
            <person name="Quail M.A."/>
            <person name="Bray-Allen S."/>
            <person name="Clark L."/>
            <person name="Doggett J."/>
            <person name="Hall S."/>
            <person name="Kay M."/>
            <person name="Lennard N."/>
            <person name="McLay K."/>
            <person name="Mayes R."/>
            <person name="Pettett A."/>
            <person name="Rajandream M.A."/>
            <person name="Lyne M."/>
            <person name="Benes V."/>
            <person name="Rechmann S."/>
            <person name="Borkova D."/>
            <person name="Bloecker H."/>
            <person name="Scharfe M."/>
            <person name="Grimm M."/>
            <person name="Loehnert T.-H."/>
            <person name="Dose S."/>
            <person name="de Haan M."/>
            <person name="Maarse A.C."/>
            <person name="Schaefer M."/>
            <person name="Mueller-Auer S."/>
            <person name="Gabel C."/>
            <person name="Fuchs M."/>
            <person name="Fartmann B."/>
            <person name="Granderath K."/>
            <person name="Dauner D."/>
            <person name="Herzl A."/>
            <person name="Neumann S."/>
            <person name="Argiriou A."/>
            <person name="Vitale D."/>
            <person name="Liguori R."/>
            <person name="Piravandi E."/>
            <person name="Massenet O."/>
            <person name="Quigley F."/>
            <person name="Clabauld G."/>
            <person name="Muendlein A."/>
            <person name="Felber R."/>
            <person name="Schnabl S."/>
            <person name="Hiller R."/>
            <person name="Schmidt W."/>
            <person name="Lecharny A."/>
            <person name="Aubourg S."/>
            <person name="Chefdor F."/>
            <person name="Cooke R."/>
            <person name="Berger C."/>
            <person name="Monfort A."/>
            <person name="Casacuberta E."/>
            <person name="Gibbons T."/>
            <person name="Weber N."/>
            <person name="Vandenbol M."/>
            <person name="Bargues M."/>
            <person name="Terol J."/>
            <person name="Torres A."/>
            <person name="Perez-Perez A."/>
            <person name="Purnelle B."/>
            <person name="Bent E."/>
            <person name="Johnson S."/>
            <person name="Tacon D."/>
            <person name="Jesse T."/>
            <person name="Heijnen L."/>
            <person name="Schwarz S."/>
            <person name="Scholler P."/>
            <person name="Heber S."/>
            <person name="Francs P."/>
            <person name="Bielke C."/>
            <person name="Frishman D."/>
            <person name="Haase D."/>
            <person name="Lemcke K."/>
            <person name="Mewes H.-W."/>
            <person name="Stocker S."/>
            <person name="Zaccaria P."/>
            <person name="Bevan M."/>
            <person name="Wilson R.K."/>
            <person name="de la Bastide M."/>
            <person name="Habermann K."/>
            <person name="Parnell L."/>
            <person name="Dedhia N."/>
            <person name="Gnoj L."/>
            <person name="Schutz K."/>
            <person name="Huang E."/>
            <person name="Spiegel L."/>
            <person name="Sekhon M."/>
            <person name="Murray J."/>
            <person name="Sheet P."/>
            <person name="Cordes M."/>
            <person name="Abu-Threideh J."/>
            <person name="Stoneking T."/>
            <person name="Kalicki J."/>
            <person name="Graves T."/>
            <person name="Harmon G."/>
            <person name="Edwards J."/>
            <person name="Latreille P."/>
            <person name="Courtney L."/>
            <person name="Cloud J."/>
            <person name="Abbott A."/>
            <person name="Scott K."/>
            <person name="Johnson D."/>
            <person name="Minx P."/>
            <person name="Bentley D."/>
            <person name="Fulton B."/>
            <person name="Miller N."/>
            <person name="Greco T."/>
            <person name="Kemp K."/>
            <person name="Kramer J."/>
            <person name="Fulton L."/>
            <person name="Mardis E."/>
            <person name="Dante M."/>
            <person name="Pepin K."/>
            <person name="Hillier L.W."/>
            <person name="Nelson J."/>
            <person name="Spieth J."/>
            <person name="Ryan E."/>
            <person name="Andrews S."/>
            <person name="Geisel C."/>
            <person name="Layman D."/>
            <person name="Du H."/>
            <person name="Ali J."/>
            <person name="Berghoff A."/>
            <person name="Jones K."/>
            <person name="Drone K."/>
            <person name="Cotton M."/>
            <person name="Joshu C."/>
            <person name="Antonoiu B."/>
            <person name="Zidanic M."/>
            <person name="Strong C."/>
            <person name="Sun H."/>
            <person name="Lamar B."/>
            <person name="Yordan C."/>
            <person name="Ma P."/>
            <person name="Zhong J."/>
            <person name="Preston R."/>
            <person name="Vil D."/>
            <person name="Shekher M."/>
            <person name="Matero A."/>
            <person name="Shah R."/>
            <person name="Swaby I.K."/>
            <person name="O'Shaughnessy A."/>
            <person name="Rodriguez M."/>
            <person name="Hoffman J."/>
            <person name="Till S."/>
            <person name="Granat S."/>
            <person name="Shohdy N."/>
            <person name="Hasegawa A."/>
            <person name="Hameed A."/>
            <person name="Lodhi M."/>
            <person name="Johnson A."/>
            <person name="Chen E."/>
            <person name="Marra M.A."/>
            <person name="Martienssen R."/>
            <person name="McCombie W.R."/>
        </authorList>
    </citation>
    <scope>NUCLEOTIDE SEQUENCE [LARGE SCALE GENOMIC DNA]</scope>
    <source>
        <strain>cv. Columbia</strain>
    </source>
</reference>
<reference key="2">
    <citation type="journal article" date="2017" name="Plant J.">
        <title>Araport11: a complete reannotation of the Arabidopsis thaliana reference genome.</title>
        <authorList>
            <person name="Cheng C.Y."/>
            <person name="Krishnakumar V."/>
            <person name="Chan A.P."/>
            <person name="Thibaud-Nissen F."/>
            <person name="Schobel S."/>
            <person name="Town C.D."/>
        </authorList>
    </citation>
    <scope>GENOME REANNOTATION</scope>
    <source>
        <strain>cv. Columbia</strain>
    </source>
</reference>
<protein>
    <recommendedName>
        <fullName>Putative F-box/FBD/LRR-repeat protein At4g03220</fullName>
    </recommendedName>
</protein>